<keyword id="KW-0963">Cytoplasm</keyword>
<keyword id="KW-0460">Magnesium</keyword>
<keyword id="KW-0479">Metal-binding</keyword>
<keyword id="KW-0548">Nucleotidyltransferase</keyword>
<keyword id="KW-1185">Reference proteome</keyword>
<keyword id="KW-0694">RNA-binding</keyword>
<keyword id="KW-0808">Transferase</keyword>
<feature type="chain" id="PRO_1000192480" description="Polyribonucleotide nucleotidyltransferase">
    <location>
        <begin position="1"/>
        <end position="715"/>
    </location>
</feature>
<feature type="domain" description="KH" evidence="1">
    <location>
        <begin position="555"/>
        <end position="614"/>
    </location>
</feature>
<feature type="domain" description="S1 motif" evidence="1">
    <location>
        <begin position="624"/>
        <end position="692"/>
    </location>
</feature>
<feature type="region of interest" description="Disordered" evidence="2">
    <location>
        <begin position="692"/>
        <end position="715"/>
    </location>
</feature>
<feature type="compositionally biased region" description="Basic and acidic residues" evidence="2">
    <location>
        <begin position="701"/>
        <end position="715"/>
    </location>
</feature>
<feature type="binding site" evidence="1">
    <location>
        <position position="488"/>
    </location>
    <ligand>
        <name>Mg(2+)</name>
        <dbReference type="ChEBI" id="CHEBI:18420"/>
    </ligand>
</feature>
<feature type="binding site" evidence="1">
    <location>
        <position position="494"/>
    </location>
    <ligand>
        <name>Mg(2+)</name>
        <dbReference type="ChEBI" id="CHEBI:18420"/>
    </ligand>
</feature>
<evidence type="ECO:0000255" key="1">
    <source>
        <dbReference type="HAMAP-Rule" id="MF_01595"/>
    </source>
</evidence>
<evidence type="ECO:0000256" key="2">
    <source>
        <dbReference type="SAM" id="MobiDB-lite"/>
    </source>
</evidence>
<accession>B4RC48</accession>
<dbReference type="EC" id="2.7.7.8" evidence="1"/>
<dbReference type="EMBL" id="CP000747">
    <property type="protein sequence ID" value="ACG79841.1"/>
    <property type="molecule type" value="Genomic_DNA"/>
</dbReference>
<dbReference type="RefSeq" id="WP_012523979.1">
    <property type="nucleotide sequence ID" value="NC_011144.1"/>
</dbReference>
<dbReference type="SMR" id="B4RC48"/>
<dbReference type="STRING" id="450851.PHZ_c3432"/>
<dbReference type="KEGG" id="pzu:PHZ_c3432"/>
<dbReference type="eggNOG" id="COG1185">
    <property type="taxonomic scope" value="Bacteria"/>
</dbReference>
<dbReference type="HOGENOM" id="CLU_004217_2_2_5"/>
<dbReference type="OrthoDB" id="9804305at2"/>
<dbReference type="Proteomes" id="UP000001868">
    <property type="component" value="Chromosome"/>
</dbReference>
<dbReference type="GO" id="GO:0005829">
    <property type="term" value="C:cytosol"/>
    <property type="evidence" value="ECO:0007669"/>
    <property type="project" value="TreeGrafter"/>
</dbReference>
<dbReference type="GO" id="GO:0000175">
    <property type="term" value="F:3'-5'-RNA exonuclease activity"/>
    <property type="evidence" value="ECO:0007669"/>
    <property type="project" value="TreeGrafter"/>
</dbReference>
<dbReference type="GO" id="GO:0000287">
    <property type="term" value="F:magnesium ion binding"/>
    <property type="evidence" value="ECO:0007669"/>
    <property type="project" value="UniProtKB-UniRule"/>
</dbReference>
<dbReference type="GO" id="GO:0004654">
    <property type="term" value="F:polyribonucleotide nucleotidyltransferase activity"/>
    <property type="evidence" value="ECO:0007669"/>
    <property type="project" value="UniProtKB-UniRule"/>
</dbReference>
<dbReference type="GO" id="GO:0003723">
    <property type="term" value="F:RNA binding"/>
    <property type="evidence" value="ECO:0007669"/>
    <property type="project" value="UniProtKB-UniRule"/>
</dbReference>
<dbReference type="GO" id="GO:0006402">
    <property type="term" value="P:mRNA catabolic process"/>
    <property type="evidence" value="ECO:0007669"/>
    <property type="project" value="UniProtKB-UniRule"/>
</dbReference>
<dbReference type="GO" id="GO:0006396">
    <property type="term" value="P:RNA processing"/>
    <property type="evidence" value="ECO:0007669"/>
    <property type="project" value="InterPro"/>
</dbReference>
<dbReference type="CDD" id="cd02393">
    <property type="entry name" value="KH-I_PNPase"/>
    <property type="match status" value="1"/>
</dbReference>
<dbReference type="CDD" id="cd11363">
    <property type="entry name" value="RNase_PH_PNPase_1"/>
    <property type="match status" value="1"/>
</dbReference>
<dbReference type="CDD" id="cd11364">
    <property type="entry name" value="RNase_PH_PNPase_2"/>
    <property type="match status" value="1"/>
</dbReference>
<dbReference type="CDD" id="cd04472">
    <property type="entry name" value="S1_PNPase"/>
    <property type="match status" value="1"/>
</dbReference>
<dbReference type="FunFam" id="2.40.50.140:FF:000107">
    <property type="entry name" value="Polyribonucleotide nucleotidyltransferase"/>
    <property type="match status" value="1"/>
</dbReference>
<dbReference type="FunFam" id="3.30.1370.10:FF:000001">
    <property type="entry name" value="Polyribonucleotide nucleotidyltransferase"/>
    <property type="match status" value="1"/>
</dbReference>
<dbReference type="FunFam" id="3.30.230.70:FF:000001">
    <property type="entry name" value="Polyribonucleotide nucleotidyltransferase"/>
    <property type="match status" value="1"/>
</dbReference>
<dbReference type="FunFam" id="3.30.230.70:FF:000002">
    <property type="entry name" value="Polyribonucleotide nucleotidyltransferase"/>
    <property type="match status" value="1"/>
</dbReference>
<dbReference type="Gene3D" id="3.30.230.70">
    <property type="entry name" value="GHMP Kinase, N-terminal domain"/>
    <property type="match status" value="2"/>
</dbReference>
<dbReference type="Gene3D" id="3.30.1370.10">
    <property type="entry name" value="K Homology domain, type 1"/>
    <property type="match status" value="1"/>
</dbReference>
<dbReference type="Gene3D" id="2.40.50.140">
    <property type="entry name" value="Nucleic acid-binding proteins"/>
    <property type="match status" value="1"/>
</dbReference>
<dbReference type="HAMAP" id="MF_01595">
    <property type="entry name" value="PNPase"/>
    <property type="match status" value="1"/>
</dbReference>
<dbReference type="InterPro" id="IPR001247">
    <property type="entry name" value="ExoRNase_PH_dom1"/>
</dbReference>
<dbReference type="InterPro" id="IPR015847">
    <property type="entry name" value="ExoRNase_PH_dom2"/>
</dbReference>
<dbReference type="InterPro" id="IPR036345">
    <property type="entry name" value="ExoRNase_PH_dom2_sf"/>
</dbReference>
<dbReference type="InterPro" id="IPR004087">
    <property type="entry name" value="KH_dom"/>
</dbReference>
<dbReference type="InterPro" id="IPR004088">
    <property type="entry name" value="KH_dom_type_1"/>
</dbReference>
<dbReference type="InterPro" id="IPR036612">
    <property type="entry name" value="KH_dom_type_1_sf"/>
</dbReference>
<dbReference type="InterPro" id="IPR012340">
    <property type="entry name" value="NA-bd_OB-fold"/>
</dbReference>
<dbReference type="InterPro" id="IPR012162">
    <property type="entry name" value="PNPase"/>
</dbReference>
<dbReference type="InterPro" id="IPR027408">
    <property type="entry name" value="PNPase/RNase_PH_dom_sf"/>
</dbReference>
<dbReference type="InterPro" id="IPR015848">
    <property type="entry name" value="PNPase_PH_RNA-bd_bac/org-type"/>
</dbReference>
<dbReference type="InterPro" id="IPR036456">
    <property type="entry name" value="PNPase_PH_RNA-bd_sf"/>
</dbReference>
<dbReference type="InterPro" id="IPR020568">
    <property type="entry name" value="Ribosomal_Su5_D2-typ_SF"/>
</dbReference>
<dbReference type="InterPro" id="IPR003029">
    <property type="entry name" value="S1_domain"/>
</dbReference>
<dbReference type="NCBIfam" id="TIGR03591">
    <property type="entry name" value="polynuc_phos"/>
    <property type="match status" value="1"/>
</dbReference>
<dbReference type="NCBIfam" id="NF008805">
    <property type="entry name" value="PRK11824.1"/>
    <property type="match status" value="1"/>
</dbReference>
<dbReference type="PANTHER" id="PTHR11252">
    <property type="entry name" value="POLYRIBONUCLEOTIDE NUCLEOTIDYLTRANSFERASE"/>
    <property type="match status" value="1"/>
</dbReference>
<dbReference type="PANTHER" id="PTHR11252:SF0">
    <property type="entry name" value="POLYRIBONUCLEOTIDE NUCLEOTIDYLTRANSFERASE 1, MITOCHONDRIAL"/>
    <property type="match status" value="1"/>
</dbReference>
<dbReference type="Pfam" id="PF00013">
    <property type="entry name" value="KH_1"/>
    <property type="match status" value="1"/>
</dbReference>
<dbReference type="Pfam" id="PF03726">
    <property type="entry name" value="PNPase"/>
    <property type="match status" value="1"/>
</dbReference>
<dbReference type="Pfam" id="PF01138">
    <property type="entry name" value="RNase_PH"/>
    <property type="match status" value="2"/>
</dbReference>
<dbReference type="Pfam" id="PF03725">
    <property type="entry name" value="RNase_PH_C"/>
    <property type="match status" value="2"/>
</dbReference>
<dbReference type="Pfam" id="PF00575">
    <property type="entry name" value="S1"/>
    <property type="match status" value="1"/>
</dbReference>
<dbReference type="PIRSF" id="PIRSF005499">
    <property type="entry name" value="PNPase"/>
    <property type="match status" value="1"/>
</dbReference>
<dbReference type="SMART" id="SM00322">
    <property type="entry name" value="KH"/>
    <property type="match status" value="1"/>
</dbReference>
<dbReference type="SMART" id="SM00316">
    <property type="entry name" value="S1"/>
    <property type="match status" value="1"/>
</dbReference>
<dbReference type="SUPFAM" id="SSF54791">
    <property type="entry name" value="Eukaryotic type KH-domain (KH-domain type I)"/>
    <property type="match status" value="1"/>
</dbReference>
<dbReference type="SUPFAM" id="SSF50249">
    <property type="entry name" value="Nucleic acid-binding proteins"/>
    <property type="match status" value="1"/>
</dbReference>
<dbReference type="SUPFAM" id="SSF46915">
    <property type="entry name" value="Polynucleotide phosphorylase/guanosine pentaphosphate synthase (PNPase/GPSI), domain 3"/>
    <property type="match status" value="1"/>
</dbReference>
<dbReference type="SUPFAM" id="SSF55666">
    <property type="entry name" value="Ribonuclease PH domain 2-like"/>
    <property type="match status" value="2"/>
</dbReference>
<dbReference type="SUPFAM" id="SSF54211">
    <property type="entry name" value="Ribosomal protein S5 domain 2-like"/>
    <property type="match status" value="2"/>
</dbReference>
<dbReference type="PROSITE" id="PS50084">
    <property type="entry name" value="KH_TYPE_1"/>
    <property type="match status" value="1"/>
</dbReference>
<dbReference type="PROSITE" id="PS50126">
    <property type="entry name" value="S1"/>
    <property type="match status" value="1"/>
</dbReference>
<organism>
    <name type="scientific">Phenylobacterium zucineum (strain HLK1)</name>
    <dbReference type="NCBI Taxonomy" id="450851"/>
    <lineage>
        <taxon>Bacteria</taxon>
        <taxon>Pseudomonadati</taxon>
        <taxon>Pseudomonadota</taxon>
        <taxon>Alphaproteobacteria</taxon>
        <taxon>Caulobacterales</taxon>
        <taxon>Caulobacteraceae</taxon>
        <taxon>Phenylobacterium</taxon>
    </lineage>
</organism>
<sequence length="715" mass="77215">MFDIKRKTIEWGGKTLTLETGRMARQADGAVLATYGETMVLATAVFAKSPKPGQDFFPLTVNYQEKFYAAGKIPGSFPRREGAPSQKETLTSRLIDRPIRPLFVKGFKNEVQVICTVLAHDLENDPDIVAMVAASAALVLSGVPFMGPIAAARVGYVNGEYVLNPTLDEMKESAMDLVVAGTAEAVMMVESEIKELTEEQVLGGVTFAHKGMQPVIDAIIELAEHSAKEPFDFQPDDTDEIAAKVKDLIGGDLRAAYQITGKSERHAAIGAAKEKAMTAFAKSEANPEGYDANKLGGVFKEIEADIVRRSILETGKRIDGRTVDQVRPILGEVGVLPRAHGSALFTRGETQALCVTTLGTGDDEQLIDALEGKYFEKFMLHYNFPPFSVGETGRMGSPGRREVGHGKLAWRALRPMLPSYEEFPYTIRIVSEIFESNGSSSMATVCGSSLALMDAGVPLKKPVSGIAMGLILEKDGFAVLSDILGDEDHLGDMDFKVAGTADGITSLQMDIKIAGITEEIMKKALEQAKGGRDHILAEMNKAMTAPRAELGEFAPKIETIKIPVDKIREVIGSGGKVIREIVEKTGAKIDIGEDGTIKIAAAEQTKIDAAKEWIKSIASEPEVGQIYTGKVVKIVDFGAFVNFFGAKDGLVHVSQISNERVAKVSDVLTEGQQVKVKLLGFDDRGKTRLSMKVVDQETGEDLSKSNEKAEEPADA</sequence>
<proteinExistence type="inferred from homology"/>
<name>PNP_PHEZH</name>
<comment type="function">
    <text evidence="1">Involved in mRNA degradation. Catalyzes the phosphorolysis of single-stranded polyribonucleotides processively in the 3'- to 5'-direction.</text>
</comment>
<comment type="catalytic activity">
    <reaction evidence="1">
        <text>RNA(n+1) + phosphate = RNA(n) + a ribonucleoside 5'-diphosphate</text>
        <dbReference type="Rhea" id="RHEA:22096"/>
        <dbReference type="Rhea" id="RHEA-COMP:14527"/>
        <dbReference type="Rhea" id="RHEA-COMP:17342"/>
        <dbReference type="ChEBI" id="CHEBI:43474"/>
        <dbReference type="ChEBI" id="CHEBI:57930"/>
        <dbReference type="ChEBI" id="CHEBI:140395"/>
        <dbReference type="EC" id="2.7.7.8"/>
    </reaction>
</comment>
<comment type="cofactor">
    <cofactor evidence="1">
        <name>Mg(2+)</name>
        <dbReference type="ChEBI" id="CHEBI:18420"/>
    </cofactor>
</comment>
<comment type="subcellular location">
    <subcellularLocation>
        <location evidence="1">Cytoplasm</location>
    </subcellularLocation>
</comment>
<comment type="similarity">
    <text evidence="1">Belongs to the polyribonucleotide nucleotidyltransferase family.</text>
</comment>
<gene>
    <name evidence="1" type="primary">pnp</name>
    <name type="ordered locus">PHZ_c3432</name>
</gene>
<reference key="1">
    <citation type="journal article" date="2008" name="BMC Genomics">
        <title>Complete genome of Phenylobacterium zucineum - a novel facultative intracellular bacterium isolated from human erythroleukemia cell line K562.</title>
        <authorList>
            <person name="Luo Y."/>
            <person name="Xu X."/>
            <person name="Ding Z."/>
            <person name="Liu Z."/>
            <person name="Zhang B."/>
            <person name="Yan Z."/>
            <person name="Sun J."/>
            <person name="Hu S."/>
            <person name="Hu X."/>
        </authorList>
    </citation>
    <scope>NUCLEOTIDE SEQUENCE [LARGE SCALE GENOMIC DNA]</scope>
    <source>
        <strain>HLK1</strain>
    </source>
</reference>
<protein>
    <recommendedName>
        <fullName evidence="1">Polyribonucleotide nucleotidyltransferase</fullName>
        <ecNumber evidence="1">2.7.7.8</ecNumber>
    </recommendedName>
    <alternativeName>
        <fullName evidence="1">Polynucleotide phosphorylase</fullName>
        <shortName evidence="1">PNPase</shortName>
    </alternativeName>
</protein>